<gene>
    <name type="primary">Prickle1</name>
</gene>
<dbReference type="EMBL" id="AK153711">
    <property type="protein sequence ID" value="BAE32152.1"/>
    <property type="molecule type" value="mRNA"/>
</dbReference>
<dbReference type="EMBL" id="BC117892">
    <property type="protein sequence ID" value="AAI17893.1"/>
    <property type="molecule type" value="mRNA"/>
</dbReference>
<dbReference type="EMBL" id="BC117893">
    <property type="protein sequence ID" value="AAI17894.1"/>
    <property type="molecule type" value="mRNA"/>
</dbReference>
<dbReference type="CCDS" id="CCDS27769.1"/>
<dbReference type="RefSeq" id="NP_001028389.1">
    <property type="nucleotide sequence ID" value="NM_001033217.5"/>
</dbReference>
<dbReference type="RefSeq" id="NP_001351775.1">
    <property type="nucleotide sequence ID" value="NM_001364846.1"/>
</dbReference>
<dbReference type="RefSeq" id="XP_006520327.1">
    <property type="nucleotide sequence ID" value="XM_006520264.5"/>
</dbReference>
<dbReference type="RefSeq" id="XP_006520328.1">
    <property type="nucleotide sequence ID" value="XM_006520265.2"/>
</dbReference>
<dbReference type="RefSeq" id="XP_006520329.1">
    <property type="nucleotide sequence ID" value="XM_006520266.3"/>
</dbReference>
<dbReference type="RefSeq" id="XP_030104125.1">
    <property type="nucleotide sequence ID" value="XM_030248265.2"/>
</dbReference>
<dbReference type="SMR" id="Q3U5C7"/>
<dbReference type="BioGRID" id="222980">
    <property type="interactions" value="45"/>
</dbReference>
<dbReference type="FunCoup" id="Q3U5C7">
    <property type="interactions" value="740"/>
</dbReference>
<dbReference type="IntAct" id="Q3U5C7">
    <property type="interactions" value="2"/>
</dbReference>
<dbReference type="MINT" id="Q3U5C7"/>
<dbReference type="STRING" id="10090.ENSMUSP00000104878"/>
<dbReference type="iPTMnet" id="Q3U5C7"/>
<dbReference type="PhosphoSitePlus" id="Q3U5C7"/>
<dbReference type="jPOST" id="Q3U5C7"/>
<dbReference type="PaxDb" id="10090-ENSMUSP00000104878"/>
<dbReference type="PeptideAtlas" id="Q3U5C7"/>
<dbReference type="ProteomicsDB" id="291559"/>
<dbReference type="Antibodypedia" id="13204">
    <property type="antibodies" value="134 antibodies from 23 providers"/>
</dbReference>
<dbReference type="Ensembl" id="ENSMUST00000048982.11">
    <property type="protein sequence ID" value="ENSMUSP00000049204.5"/>
    <property type="gene ID" value="ENSMUSG00000036158.13"/>
</dbReference>
<dbReference type="Ensembl" id="ENSMUST00000109255.3">
    <property type="protein sequence ID" value="ENSMUSP00000104878.3"/>
    <property type="gene ID" value="ENSMUSG00000036158.13"/>
</dbReference>
<dbReference type="GeneID" id="106042"/>
<dbReference type="KEGG" id="mmu:106042"/>
<dbReference type="UCSC" id="uc007xja.1">
    <property type="organism name" value="mouse"/>
</dbReference>
<dbReference type="AGR" id="MGI:1916034"/>
<dbReference type="CTD" id="144165"/>
<dbReference type="MGI" id="MGI:1916034">
    <property type="gene designation" value="Prickle1"/>
</dbReference>
<dbReference type="VEuPathDB" id="HostDB:ENSMUSG00000036158"/>
<dbReference type="eggNOG" id="KOG1704">
    <property type="taxonomic scope" value="Eukaryota"/>
</dbReference>
<dbReference type="GeneTree" id="ENSGT00940000157529"/>
<dbReference type="HOGENOM" id="CLU_008937_5_0_1"/>
<dbReference type="InParanoid" id="Q3U5C7"/>
<dbReference type="OMA" id="NLVFGCQ"/>
<dbReference type="OrthoDB" id="10069167at2759"/>
<dbReference type="PhylomeDB" id="Q3U5C7"/>
<dbReference type="TreeFam" id="TF313265"/>
<dbReference type="Reactome" id="R-MMU-4608870">
    <property type="pathway name" value="Asymmetric localization of PCP proteins"/>
</dbReference>
<dbReference type="BioGRID-ORCS" id="106042">
    <property type="hits" value="2 hits in 80 CRISPR screens"/>
</dbReference>
<dbReference type="CD-CODE" id="CE726F99">
    <property type="entry name" value="Postsynaptic density"/>
</dbReference>
<dbReference type="ChiTaRS" id="Prickle1">
    <property type="organism name" value="mouse"/>
</dbReference>
<dbReference type="PRO" id="PR:Q3U5C7"/>
<dbReference type="Proteomes" id="UP000000589">
    <property type="component" value="Chromosome 15"/>
</dbReference>
<dbReference type="RNAct" id="Q3U5C7">
    <property type="molecule type" value="protein"/>
</dbReference>
<dbReference type="Bgee" id="ENSMUSG00000036158">
    <property type="expression patterns" value="Expressed in digit and 303 other cell types or tissues"/>
</dbReference>
<dbReference type="GO" id="GO:0031254">
    <property type="term" value="C:cell trailing edge"/>
    <property type="evidence" value="ECO:0000314"/>
    <property type="project" value="MGI"/>
</dbReference>
<dbReference type="GO" id="GO:0005829">
    <property type="term" value="C:cytosol"/>
    <property type="evidence" value="ECO:0007669"/>
    <property type="project" value="UniProtKB-SubCell"/>
</dbReference>
<dbReference type="GO" id="GO:0098978">
    <property type="term" value="C:glutamatergic synapse"/>
    <property type="evidence" value="ECO:0000314"/>
    <property type="project" value="SynGO"/>
</dbReference>
<dbReference type="GO" id="GO:0016020">
    <property type="term" value="C:membrane"/>
    <property type="evidence" value="ECO:0000315"/>
    <property type="project" value="MGI"/>
</dbReference>
<dbReference type="GO" id="GO:0031965">
    <property type="term" value="C:nuclear membrane"/>
    <property type="evidence" value="ECO:0007669"/>
    <property type="project" value="UniProtKB-SubCell"/>
</dbReference>
<dbReference type="GO" id="GO:0005634">
    <property type="term" value="C:nucleus"/>
    <property type="evidence" value="ECO:0000314"/>
    <property type="project" value="MGI"/>
</dbReference>
<dbReference type="GO" id="GO:0014069">
    <property type="term" value="C:postsynaptic density"/>
    <property type="evidence" value="ECO:0000314"/>
    <property type="project" value="SynGO"/>
</dbReference>
<dbReference type="GO" id="GO:0000502">
    <property type="term" value="C:proteasome complex"/>
    <property type="evidence" value="ECO:0000314"/>
    <property type="project" value="MGI"/>
</dbReference>
<dbReference type="GO" id="GO:0044877">
    <property type="term" value="F:protein-containing complex binding"/>
    <property type="evidence" value="ECO:0000314"/>
    <property type="project" value="MGI"/>
</dbReference>
<dbReference type="GO" id="GO:0008270">
    <property type="term" value="F:zinc ion binding"/>
    <property type="evidence" value="ECO:0007669"/>
    <property type="project" value="InterPro"/>
</dbReference>
<dbReference type="GO" id="GO:0009887">
    <property type="term" value="P:animal organ morphogenesis"/>
    <property type="evidence" value="ECO:0000315"/>
    <property type="project" value="MGI"/>
</dbReference>
<dbReference type="GO" id="GO:1905070">
    <property type="term" value="P:anterior visceral endoderm cell migration"/>
    <property type="evidence" value="ECO:0000315"/>
    <property type="project" value="MGI"/>
</dbReference>
<dbReference type="GO" id="GO:0035904">
    <property type="term" value="P:aorta development"/>
    <property type="evidence" value="ECO:0000315"/>
    <property type="project" value="MGI"/>
</dbReference>
<dbReference type="GO" id="GO:0006915">
    <property type="term" value="P:apoptotic process"/>
    <property type="evidence" value="ECO:0000315"/>
    <property type="project" value="MGI"/>
</dbReference>
<dbReference type="GO" id="GO:0007409">
    <property type="term" value="P:axonogenesis"/>
    <property type="evidence" value="ECO:0000315"/>
    <property type="project" value="MGI"/>
</dbReference>
<dbReference type="GO" id="GO:0071711">
    <property type="term" value="P:basement membrane organization"/>
    <property type="evidence" value="ECO:0000315"/>
    <property type="project" value="MGI"/>
</dbReference>
<dbReference type="GO" id="GO:0030282">
    <property type="term" value="P:bone mineralization"/>
    <property type="evidence" value="ECO:0000315"/>
    <property type="project" value="MGI"/>
</dbReference>
<dbReference type="GO" id="GO:0055013">
    <property type="term" value="P:cardiac muscle cell development"/>
    <property type="evidence" value="ECO:0000315"/>
    <property type="project" value="MGI"/>
</dbReference>
<dbReference type="GO" id="GO:0016477">
    <property type="term" value="P:cell migration"/>
    <property type="evidence" value="ECO:0000315"/>
    <property type="project" value="MGI"/>
</dbReference>
<dbReference type="GO" id="GO:0098609">
    <property type="term" value="P:cell-cell adhesion"/>
    <property type="evidence" value="ECO:0000315"/>
    <property type="project" value="MGI"/>
</dbReference>
<dbReference type="GO" id="GO:0060271">
    <property type="term" value="P:cilium assembly"/>
    <property type="evidence" value="ECO:0000315"/>
    <property type="project" value="MGI"/>
</dbReference>
<dbReference type="GO" id="GO:0044782">
    <property type="term" value="P:cilium organization"/>
    <property type="evidence" value="ECO:0000315"/>
    <property type="project" value="MGI"/>
</dbReference>
<dbReference type="GO" id="GO:0061303">
    <property type="term" value="P:cornea development in camera-type eye"/>
    <property type="evidence" value="ECO:0000315"/>
    <property type="project" value="MGI"/>
</dbReference>
<dbReference type="GO" id="GO:0060976">
    <property type="term" value="P:coronary vasculature development"/>
    <property type="evidence" value="ECO:0000315"/>
    <property type="project" value="MGI"/>
</dbReference>
<dbReference type="GO" id="GO:0007010">
    <property type="term" value="P:cytoskeleton organization"/>
    <property type="evidence" value="ECO:0000315"/>
    <property type="project" value="MGI"/>
</dbReference>
<dbReference type="GO" id="GO:0030705">
    <property type="term" value="P:cytoskeleton-dependent intracellular transport"/>
    <property type="evidence" value="ECO:0000315"/>
    <property type="project" value="MGI"/>
</dbReference>
<dbReference type="GO" id="GO:0016358">
    <property type="term" value="P:dendrite development"/>
    <property type="evidence" value="ECO:0000315"/>
    <property type="project" value="MGI"/>
</dbReference>
<dbReference type="GO" id="GO:1990403">
    <property type="term" value="P:embryonic brain development"/>
    <property type="evidence" value="ECO:0000315"/>
    <property type="project" value="MGI"/>
</dbReference>
<dbReference type="GO" id="GO:0042733">
    <property type="term" value="P:embryonic digit morphogenesis"/>
    <property type="evidence" value="ECO:0000315"/>
    <property type="project" value="MGI"/>
</dbReference>
<dbReference type="GO" id="GO:0030326">
    <property type="term" value="P:embryonic limb morphogenesis"/>
    <property type="evidence" value="ECO:0000315"/>
    <property type="project" value="MGI"/>
</dbReference>
<dbReference type="GO" id="GO:0035880">
    <property type="term" value="P:embryonic nail plate morphogenesis"/>
    <property type="evidence" value="ECO:0000315"/>
    <property type="project" value="MGI"/>
</dbReference>
<dbReference type="GO" id="GO:0007173">
    <property type="term" value="P:epidermal growth factor receptor signaling pathway"/>
    <property type="evidence" value="ECO:0000315"/>
    <property type="project" value="MGI"/>
</dbReference>
<dbReference type="GO" id="GO:0061159">
    <property type="term" value="P:establishment of bipolar cell polarity involved in cell morphogenesis"/>
    <property type="evidence" value="ECO:0000315"/>
    <property type="project" value="MGI"/>
</dbReference>
<dbReference type="GO" id="GO:0030010">
    <property type="term" value="P:establishment of cell polarity"/>
    <property type="evidence" value="ECO:0000315"/>
    <property type="project" value="MGI"/>
</dbReference>
<dbReference type="GO" id="GO:0045184">
    <property type="term" value="P:establishment of protein localization"/>
    <property type="evidence" value="ECO:0000315"/>
    <property type="project" value="MGI"/>
</dbReference>
<dbReference type="GO" id="GO:0007163">
    <property type="term" value="P:establishment or maintenance of cell polarity"/>
    <property type="evidence" value="ECO:0000315"/>
    <property type="project" value="MGI"/>
</dbReference>
<dbReference type="GO" id="GO:0085029">
    <property type="term" value="P:extracellular matrix assembly"/>
    <property type="evidence" value="ECO:0000315"/>
    <property type="project" value="MGI"/>
</dbReference>
<dbReference type="GO" id="GO:0061029">
    <property type="term" value="P:eyelid development in camera-type eye"/>
    <property type="evidence" value="ECO:0000315"/>
    <property type="project" value="MGI"/>
</dbReference>
<dbReference type="GO" id="GO:0060325">
    <property type="term" value="P:face morphogenesis"/>
    <property type="evidence" value="ECO:0000315"/>
    <property type="project" value="MGI"/>
</dbReference>
<dbReference type="GO" id="GO:0120181">
    <property type="term" value="P:focal adhesion disassembly"/>
    <property type="evidence" value="ECO:0000315"/>
    <property type="project" value="MGI"/>
</dbReference>
<dbReference type="GO" id="GO:0010467">
    <property type="term" value="P:gene expression"/>
    <property type="evidence" value="ECO:0000315"/>
    <property type="project" value="MGI"/>
</dbReference>
<dbReference type="GO" id="GO:0007507">
    <property type="term" value="P:heart development"/>
    <property type="evidence" value="ECO:0000315"/>
    <property type="project" value="MGI"/>
</dbReference>
<dbReference type="GO" id="GO:0060173">
    <property type="term" value="P:limb development"/>
    <property type="evidence" value="ECO:0000315"/>
    <property type="project" value="MGI"/>
</dbReference>
<dbReference type="GO" id="GO:0035108">
    <property type="term" value="P:limb morphogenesis"/>
    <property type="evidence" value="ECO:0000315"/>
    <property type="project" value="MGI"/>
</dbReference>
<dbReference type="GO" id="GO:0099562">
    <property type="term" value="P:maintenance of postsynaptic density structure"/>
    <property type="evidence" value="ECO:0000314"/>
    <property type="project" value="SynGO"/>
</dbReference>
<dbReference type="GO" id="GO:0060485">
    <property type="term" value="P:mesenchyme development"/>
    <property type="evidence" value="ECO:0000315"/>
    <property type="project" value="MGI"/>
</dbReference>
<dbReference type="GO" id="GO:0090307">
    <property type="term" value="P:mitotic spindle assembly"/>
    <property type="evidence" value="ECO:0000315"/>
    <property type="project" value="MGI"/>
</dbReference>
<dbReference type="GO" id="GO:0035264">
    <property type="term" value="P:multicellular organism growth"/>
    <property type="evidence" value="ECO:0000315"/>
    <property type="project" value="MGI"/>
</dbReference>
<dbReference type="GO" id="GO:0090090">
    <property type="term" value="P:negative regulation of canonical Wnt signaling pathway"/>
    <property type="evidence" value="ECO:0007669"/>
    <property type="project" value="Ensembl"/>
</dbReference>
<dbReference type="GO" id="GO:2000691">
    <property type="term" value="P:negative regulation of cardiac muscle cell myoblast differentiation"/>
    <property type="evidence" value="ECO:0007669"/>
    <property type="project" value="Ensembl"/>
</dbReference>
<dbReference type="GO" id="GO:0045892">
    <property type="term" value="P:negative regulation of DNA-templated transcription"/>
    <property type="evidence" value="ECO:0007669"/>
    <property type="project" value="Ensembl"/>
</dbReference>
<dbReference type="GO" id="GO:0001843">
    <property type="term" value="P:neural tube closure"/>
    <property type="evidence" value="ECO:0000315"/>
    <property type="project" value="MGI"/>
</dbReference>
<dbReference type="GO" id="GO:0031175">
    <property type="term" value="P:neuron projection development"/>
    <property type="evidence" value="ECO:0000315"/>
    <property type="project" value="MGI"/>
</dbReference>
<dbReference type="GO" id="GO:1990138">
    <property type="term" value="P:neuron projection extension"/>
    <property type="evidence" value="ECO:0000315"/>
    <property type="project" value="MGI"/>
</dbReference>
<dbReference type="GO" id="GO:0048812">
    <property type="term" value="P:neuron projection morphogenesis"/>
    <property type="evidence" value="ECO:0000315"/>
    <property type="project" value="MGI"/>
</dbReference>
<dbReference type="GO" id="GO:0003151">
    <property type="term" value="P:outflow tract morphogenesis"/>
    <property type="evidence" value="ECO:0000315"/>
    <property type="project" value="MGI"/>
</dbReference>
<dbReference type="GO" id="GO:0061865">
    <property type="term" value="P:polarized secretion of basement membrane proteins in epithelium"/>
    <property type="evidence" value="ECO:0000315"/>
    <property type="project" value="MGI"/>
</dbReference>
<dbReference type="GO" id="GO:0032436">
    <property type="term" value="P:positive regulation of proteasomal ubiquitin-dependent protein catabolic process"/>
    <property type="evidence" value="ECO:0007669"/>
    <property type="project" value="Ensembl"/>
</dbReference>
<dbReference type="GO" id="GO:0031398">
    <property type="term" value="P:positive regulation of protein ubiquitination"/>
    <property type="evidence" value="ECO:0007669"/>
    <property type="project" value="Ensembl"/>
</dbReference>
<dbReference type="GO" id="GO:0036342">
    <property type="term" value="P:post-anal tail morphogenesis"/>
    <property type="evidence" value="ECO:0000315"/>
    <property type="project" value="MGI"/>
</dbReference>
<dbReference type="GO" id="GO:0090009">
    <property type="term" value="P:primitive streak formation"/>
    <property type="evidence" value="ECO:0000315"/>
    <property type="project" value="MGI"/>
</dbReference>
<dbReference type="GO" id="GO:0012501">
    <property type="term" value="P:programmed cell death"/>
    <property type="evidence" value="ECO:0000315"/>
    <property type="project" value="MGI"/>
</dbReference>
<dbReference type="GO" id="GO:0006606">
    <property type="term" value="P:protein import into nucleus"/>
    <property type="evidence" value="ECO:0007669"/>
    <property type="project" value="Ensembl"/>
</dbReference>
<dbReference type="GO" id="GO:0099151">
    <property type="term" value="P:regulation of postsynaptic density assembly"/>
    <property type="evidence" value="ECO:0000314"/>
    <property type="project" value="SynGO"/>
</dbReference>
<dbReference type="GO" id="GO:0061326">
    <property type="term" value="P:renal tubule development"/>
    <property type="evidence" value="ECO:0000315"/>
    <property type="project" value="MGI"/>
</dbReference>
<dbReference type="GO" id="GO:0051602">
    <property type="term" value="P:response to electrical stimulus"/>
    <property type="evidence" value="ECO:0000315"/>
    <property type="project" value="MGI"/>
</dbReference>
<dbReference type="GO" id="GO:0009410">
    <property type="term" value="P:response to xenobiotic stimulus"/>
    <property type="evidence" value="ECO:0000315"/>
    <property type="project" value="MGI"/>
</dbReference>
<dbReference type="GO" id="GO:0070075">
    <property type="term" value="P:tear secretion"/>
    <property type="evidence" value="ECO:0000315"/>
    <property type="project" value="MGI"/>
</dbReference>
<dbReference type="GO" id="GO:0009888">
    <property type="term" value="P:tissue development"/>
    <property type="evidence" value="ECO:0000315"/>
    <property type="project" value="MGI"/>
</dbReference>
<dbReference type="GO" id="GO:0001894">
    <property type="term" value="P:tissue homeostasis"/>
    <property type="evidence" value="ECO:0000315"/>
    <property type="project" value="MGI"/>
</dbReference>
<dbReference type="GO" id="GO:0016192">
    <property type="term" value="P:vesicle-mediated transport"/>
    <property type="evidence" value="ECO:0000315"/>
    <property type="project" value="MGI"/>
</dbReference>
<dbReference type="GO" id="GO:0016055">
    <property type="term" value="P:Wnt signaling pathway"/>
    <property type="evidence" value="ECO:0000315"/>
    <property type="project" value="MGI"/>
</dbReference>
<dbReference type="GO" id="GO:0060071">
    <property type="term" value="P:Wnt signaling pathway, planar cell polarity pathway"/>
    <property type="evidence" value="ECO:0000315"/>
    <property type="project" value="MGI"/>
</dbReference>
<dbReference type="CDD" id="cd09483">
    <property type="entry name" value="LIM1_Prickle_1"/>
    <property type="match status" value="1"/>
</dbReference>
<dbReference type="CDD" id="cd09418">
    <property type="entry name" value="LIM2_Prickle"/>
    <property type="match status" value="1"/>
</dbReference>
<dbReference type="CDD" id="cd09420">
    <property type="entry name" value="LIM3_Prickle"/>
    <property type="match status" value="1"/>
</dbReference>
<dbReference type="CDD" id="cd09827">
    <property type="entry name" value="PET_Prickle"/>
    <property type="match status" value="1"/>
</dbReference>
<dbReference type="FunFam" id="2.10.110.10:FF:000022">
    <property type="entry name" value="prickle-like protein 2 isoform X1"/>
    <property type="match status" value="1"/>
</dbReference>
<dbReference type="FunFam" id="2.10.110.10:FF:000035">
    <property type="entry name" value="prickle-like protein 2 isoform X1"/>
    <property type="match status" value="1"/>
</dbReference>
<dbReference type="FunFam" id="2.10.110.10:FF:000005">
    <property type="entry name" value="Testin isoform 1"/>
    <property type="match status" value="1"/>
</dbReference>
<dbReference type="Gene3D" id="2.10.110.10">
    <property type="entry name" value="Cysteine Rich Protein"/>
    <property type="match status" value="3"/>
</dbReference>
<dbReference type="InterPro" id="IPR033726">
    <property type="entry name" value="LIM2_prickle"/>
</dbReference>
<dbReference type="InterPro" id="IPR033727">
    <property type="entry name" value="LIM3_prickle"/>
</dbReference>
<dbReference type="InterPro" id="IPR010442">
    <property type="entry name" value="PET_domain"/>
</dbReference>
<dbReference type="InterPro" id="IPR033723">
    <property type="entry name" value="PET_prickle"/>
</dbReference>
<dbReference type="InterPro" id="IPR047120">
    <property type="entry name" value="Pk/Esn/Tes"/>
</dbReference>
<dbReference type="InterPro" id="IPR001781">
    <property type="entry name" value="Znf_LIM"/>
</dbReference>
<dbReference type="PANTHER" id="PTHR24211">
    <property type="entry name" value="LIM DOMAIN-CONTAINING PROTEIN"/>
    <property type="match status" value="1"/>
</dbReference>
<dbReference type="PANTHER" id="PTHR24211:SF15">
    <property type="entry name" value="PRICKLE-LIKE PROTEIN 1"/>
    <property type="match status" value="1"/>
</dbReference>
<dbReference type="Pfam" id="PF00412">
    <property type="entry name" value="LIM"/>
    <property type="match status" value="3"/>
</dbReference>
<dbReference type="Pfam" id="PF06297">
    <property type="entry name" value="PET"/>
    <property type="match status" value="1"/>
</dbReference>
<dbReference type="SMART" id="SM00132">
    <property type="entry name" value="LIM"/>
    <property type="match status" value="3"/>
</dbReference>
<dbReference type="SUPFAM" id="SSF57716">
    <property type="entry name" value="Glucocorticoid receptor-like (DNA-binding domain)"/>
    <property type="match status" value="2"/>
</dbReference>
<dbReference type="PROSITE" id="PS00478">
    <property type="entry name" value="LIM_DOMAIN_1"/>
    <property type="match status" value="2"/>
</dbReference>
<dbReference type="PROSITE" id="PS50023">
    <property type="entry name" value="LIM_DOMAIN_2"/>
    <property type="match status" value="3"/>
</dbReference>
<dbReference type="PROSITE" id="PS51303">
    <property type="entry name" value="PET"/>
    <property type="match status" value="1"/>
</dbReference>
<feature type="chain" id="PRO_0000283027" description="Prickle-like protein 1">
    <location>
        <begin position="1"/>
        <end position="829"/>
    </location>
</feature>
<feature type="propeptide" id="PRO_0000396713" description="Removed in mature form" evidence="1">
    <location>
        <begin position="830"/>
        <end position="832"/>
    </location>
</feature>
<feature type="domain" description="PET" evidence="4">
    <location>
        <begin position="14"/>
        <end position="122"/>
    </location>
</feature>
<feature type="domain" description="LIM zinc-binding 1" evidence="3">
    <location>
        <begin position="124"/>
        <end position="188"/>
    </location>
</feature>
<feature type="domain" description="LIM zinc-binding 2" evidence="3">
    <location>
        <begin position="189"/>
        <end position="249"/>
    </location>
</feature>
<feature type="domain" description="LIM zinc-binding 3" evidence="3">
    <location>
        <begin position="250"/>
        <end position="313"/>
    </location>
</feature>
<feature type="region of interest" description="Disordered" evidence="5">
    <location>
        <begin position="314"/>
        <end position="342"/>
    </location>
</feature>
<feature type="region of interest" description="Disordered" evidence="5">
    <location>
        <begin position="663"/>
        <end position="688"/>
    </location>
</feature>
<feature type="region of interest" description="Disordered" evidence="5">
    <location>
        <begin position="765"/>
        <end position="832"/>
    </location>
</feature>
<feature type="compositionally biased region" description="Basic residues" evidence="5">
    <location>
        <begin position="670"/>
        <end position="681"/>
    </location>
</feature>
<feature type="compositionally biased region" description="Polar residues" evidence="5">
    <location>
        <begin position="798"/>
        <end position="815"/>
    </location>
</feature>
<feature type="compositionally biased region" description="Basic residues" evidence="5">
    <location>
        <begin position="816"/>
        <end position="832"/>
    </location>
</feature>
<feature type="modified residue" description="Phosphoserine" evidence="7">
    <location>
        <position position="315"/>
    </location>
</feature>
<feature type="modified residue" description="Phosphoserine" evidence="7">
    <location>
        <position position="592"/>
    </location>
</feature>
<feature type="modified residue" description="Phosphoserine" evidence="7">
    <location>
        <position position="595"/>
    </location>
</feature>
<feature type="modified residue" description="Phosphoserine" evidence="7">
    <location>
        <position position="684"/>
    </location>
</feature>
<feature type="modified residue" description="Cysteine methyl ester" evidence="1">
    <location>
        <position position="829"/>
    </location>
</feature>
<feature type="lipid moiety-binding region" description="S-farnesyl cysteine" evidence="1">
    <location>
        <position position="829"/>
    </location>
</feature>
<comment type="function">
    <text evidence="1">Involved in the planar cell polarity pathway that controls convergent extension during gastrulation and neural tube closure (By similarity). Convergent extension is a complex morphogenetic process during which cells elongate, move mediolaterally, and intercalate between neighboring cells, leading to convergence toward the mediolateral axis and extension along the anteroposterior axis. Necessary for nuclear localization of REST. May serve as nuclear receptor (By similarity).</text>
</comment>
<comment type="subunit">
    <text evidence="2">Interacts with REST.</text>
</comment>
<comment type="interaction">
    <interactant intactId="EBI-27099745">
        <id>Q3U5C7</id>
    </interactant>
    <interactant intactId="EBI-2312802">
        <id>Q8VIG1</id>
        <label>Rest</label>
    </interactant>
    <organismsDiffer>false</organismsDiffer>
    <experiments>2</experiments>
</comment>
<comment type="subcellular location">
    <subcellularLocation>
        <location evidence="1">Nucleus membrane</location>
    </subcellularLocation>
    <subcellularLocation>
        <location evidence="1">Cytoplasm</location>
        <location evidence="1">Cytosol</location>
    </subcellularLocation>
    <text evidence="1">A smaller amount is detected in the cytosol.</text>
</comment>
<comment type="similarity">
    <text evidence="6">Belongs to the prickle / espinas / testin family.</text>
</comment>
<reference key="1">
    <citation type="journal article" date="2005" name="Science">
        <title>The transcriptional landscape of the mammalian genome.</title>
        <authorList>
            <person name="Carninci P."/>
            <person name="Kasukawa T."/>
            <person name="Katayama S."/>
            <person name="Gough J."/>
            <person name="Frith M.C."/>
            <person name="Maeda N."/>
            <person name="Oyama R."/>
            <person name="Ravasi T."/>
            <person name="Lenhard B."/>
            <person name="Wells C."/>
            <person name="Kodzius R."/>
            <person name="Shimokawa K."/>
            <person name="Bajic V.B."/>
            <person name="Brenner S.E."/>
            <person name="Batalov S."/>
            <person name="Forrest A.R."/>
            <person name="Zavolan M."/>
            <person name="Davis M.J."/>
            <person name="Wilming L.G."/>
            <person name="Aidinis V."/>
            <person name="Allen J.E."/>
            <person name="Ambesi-Impiombato A."/>
            <person name="Apweiler R."/>
            <person name="Aturaliya R.N."/>
            <person name="Bailey T.L."/>
            <person name="Bansal M."/>
            <person name="Baxter L."/>
            <person name="Beisel K.W."/>
            <person name="Bersano T."/>
            <person name="Bono H."/>
            <person name="Chalk A.M."/>
            <person name="Chiu K.P."/>
            <person name="Choudhary V."/>
            <person name="Christoffels A."/>
            <person name="Clutterbuck D.R."/>
            <person name="Crowe M.L."/>
            <person name="Dalla E."/>
            <person name="Dalrymple B.P."/>
            <person name="de Bono B."/>
            <person name="Della Gatta G."/>
            <person name="di Bernardo D."/>
            <person name="Down T."/>
            <person name="Engstrom P."/>
            <person name="Fagiolini M."/>
            <person name="Faulkner G."/>
            <person name="Fletcher C.F."/>
            <person name="Fukushima T."/>
            <person name="Furuno M."/>
            <person name="Futaki S."/>
            <person name="Gariboldi M."/>
            <person name="Georgii-Hemming P."/>
            <person name="Gingeras T.R."/>
            <person name="Gojobori T."/>
            <person name="Green R.E."/>
            <person name="Gustincich S."/>
            <person name="Harbers M."/>
            <person name="Hayashi Y."/>
            <person name="Hensch T.K."/>
            <person name="Hirokawa N."/>
            <person name="Hill D."/>
            <person name="Huminiecki L."/>
            <person name="Iacono M."/>
            <person name="Ikeo K."/>
            <person name="Iwama A."/>
            <person name="Ishikawa T."/>
            <person name="Jakt M."/>
            <person name="Kanapin A."/>
            <person name="Katoh M."/>
            <person name="Kawasawa Y."/>
            <person name="Kelso J."/>
            <person name="Kitamura H."/>
            <person name="Kitano H."/>
            <person name="Kollias G."/>
            <person name="Krishnan S.P."/>
            <person name="Kruger A."/>
            <person name="Kummerfeld S.K."/>
            <person name="Kurochkin I.V."/>
            <person name="Lareau L.F."/>
            <person name="Lazarevic D."/>
            <person name="Lipovich L."/>
            <person name="Liu J."/>
            <person name="Liuni S."/>
            <person name="McWilliam S."/>
            <person name="Madan Babu M."/>
            <person name="Madera M."/>
            <person name="Marchionni L."/>
            <person name="Matsuda H."/>
            <person name="Matsuzawa S."/>
            <person name="Miki H."/>
            <person name="Mignone F."/>
            <person name="Miyake S."/>
            <person name="Morris K."/>
            <person name="Mottagui-Tabar S."/>
            <person name="Mulder N."/>
            <person name="Nakano N."/>
            <person name="Nakauchi H."/>
            <person name="Ng P."/>
            <person name="Nilsson R."/>
            <person name="Nishiguchi S."/>
            <person name="Nishikawa S."/>
            <person name="Nori F."/>
            <person name="Ohara O."/>
            <person name="Okazaki Y."/>
            <person name="Orlando V."/>
            <person name="Pang K.C."/>
            <person name="Pavan W.J."/>
            <person name="Pavesi G."/>
            <person name="Pesole G."/>
            <person name="Petrovsky N."/>
            <person name="Piazza S."/>
            <person name="Reed J."/>
            <person name="Reid J.F."/>
            <person name="Ring B.Z."/>
            <person name="Ringwald M."/>
            <person name="Rost B."/>
            <person name="Ruan Y."/>
            <person name="Salzberg S.L."/>
            <person name="Sandelin A."/>
            <person name="Schneider C."/>
            <person name="Schoenbach C."/>
            <person name="Sekiguchi K."/>
            <person name="Semple C.A."/>
            <person name="Seno S."/>
            <person name="Sessa L."/>
            <person name="Sheng Y."/>
            <person name="Shibata Y."/>
            <person name="Shimada H."/>
            <person name="Shimada K."/>
            <person name="Silva D."/>
            <person name="Sinclair B."/>
            <person name="Sperling S."/>
            <person name="Stupka E."/>
            <person name="Sugiura K."/>
            <person name="Sultana R."/>
            <person name="Takenaka Y."/>
            <person name="Taki K."/>
            <person name="Tammoja K."/>
            <person name="Tan S.L."/>
            <person name="Tang S."/>
            <person name="Taylor M.S."/>
            <person name="Tegner J."/>
            <person name="Teichmann S.A."/>
            <person name="Ueda H.R."/>
            <person name="van Nimwegen E."/>
            <person name="Verardo R."/>
            <person name="Wei C.L."/>
            <person name="Yagi K."/>
            <person name="Yamanishi H."/>
            <person name="Zabarovsky E."/>
            <person name="Zhu S."/>
            <person name="Zimmer A."/>
            <person name="Hide W."/>
            <person name="Bult C."/>
            <person name="Grimmond S.M."/>
            <person name="Teasdale R.D."/>
            <person name="Liu E.T."/>
            <person name="Brusic V."/>
            <person name="Quackenbush J."/>
            <person name="Wahlestedt C."/>
            <person name="Mattick J.S."/>
            <person name="Hume D.A."/>
            <person name="Kai C."/>
            <person name="Sasaki D."/>
            <person name="Tomaru Y."/>
            <person name="Fukuda S."/>
            <person name="Kanamori-Katayama M."/>
            <person name="Suzuki M."/>
            <person name="Aoki J."/>
            <person name="Arakawa T."/>
            <person name="Iida J."/>
            <person name="Imamura K."/>
            <person name="Itoh M."/>
            <person name="Kato T."/>
            <person name="Kawaji H."/>
            <person name="Kawagashira N."/>
            <person name="Kawashima T."/>
            <person name="Kojima M."/>
            <person name="Kondo S."/>
            <person name="Konno H."/>
            <person name="Nakano K."/>
            <person name="Ninomiya N."/>
            <person name="Nishio T."/>
            <person name="Okada M."/>
            <person name="Plessy C."/>
            <person name="Shibata K."/>
            <person name="Shiraki T."/>
            <person name="Suzuki S."/>
            <person name="Tagami M."/>
            <person name="Waki K."/>
            <person name="Watahiki A."/>
            <person name="Okamura-Oho Y."/>
            <person name="Suzuki H."/>
            <person name="Kawai J."/>
            <person name="Hayashizaki Y."/>
        </authorList>
    </citation>
    <scope>NUCLEOTIDE SEQUENCE [LARGE SCALE MRNA]</scope>
    <source>
        <strain>C57BL/6J</strain>
        <tissue>Thymus</tissue>
    </source>
</reference>
<reference key="2">
    <citation type="journal article" date="2004" name="Genome Res.">
        <title>The status, quality, and expansion of the NIH full-length cDNA project: the Mammalian Gene Collection (MGC).</title>
        <authorList>
            <consortium name="The MGC Project Team"/>
        </authorList>
    </citation>
    <scope>NUCLEOTIDE SEQUENCE [LARGE SCALE MRNA]</scope>
</reference>
<reference key="3">
    <citation type="journal article" date="2010" name="Cell">
        <title>A tissue-specific atlas of mouse protein phosphorylation and expression.</title>
        <authorList>
            <person name="Huttlin E.L."/>
            <person name="Jedrychowski M.P."/>
            <person name="Elias J.E."/>
            <person name="Goswami T."/>
            <person name="Rad R."/>
            <person name="Beausoleil S.A."/>
            <person name="Villen J."/>
            <person name="Haas W."/>
            <person name="Sowa M.E."/>
            <person name="Gygi S.P."/>
        </authorList>
    </citation>
    <scope>PHOSPHORYLATION [LARGE SCALE ANALYSIS] AT SER-315; SER-592; SER-595 AND SER-684</scope>
    <scope>IDENTIFICATION BY MASS SPECTROMETRY [LARGE SCALE ANALYSIS]</scope>
    <source>
        <tissue>Brain</tissue>
        <tissue>Brown adipose tissue</tissue>
        <tissue>Heart</tissue>
        <tissue>Lung</tissue>
        <tissue>Testis</tissue>
    </source>
</reference>
<accession>Q3U5C7</accession>
<evidence type="ECO:0000250" key="1"/>
<evidence type="ECO:0000250" key="2">
    <source>
        <dbReference type="UniProtKB" id="Q96MT3"/>
    </source>
</evidence>
<evidence type="ECO:0000255" key="3">
    <source>
        <dbReference type="PROSITE-ProRule" id="PRU00125"/>
    </source>
</evidence>
<evidence type="ECO:0000255" key="4">
    <source>
        <dbReference type="PROSITE-ProRule" id="PRU00636"/>
    </source>
</evidence>
<evidence type="ECO:0000256" key="5">
    <source>
        <dbReference type="SAM" id="MobiDB-lite"/>
    </source>
</evidence>
<evidence type="ECO:0000305" key="6"/>
<evidence type="ECO:0007744" key="7">
    <source>
    </source>
</evidence>
<name>PRIC1_MOUSE</name>
<protein>
    <recommendedName>
        <fullName>Prickle-like protein 1</fullName>
    </recommendedName>
</protein>
<proteinExistence type="evidence at protein level"/>
<organism>
    <name type="scientific">Mus musculus</name>
    <name type="common">Mouse</name>
    <dbReference type="NCBI Taxonomy" id="10090"/>
    <lineage>
        <taxon>Eukaryota</taxon>
        <taxon>Metazoa</taxon>
        <taxon>Chordata</taxon>
        <taxon>Craniata</taxon>
        <taxon>Vertebrata</taxon>
        <taxon>Euteleostomi</taxon>
        <taxon>Mammalia</taxon>
        <taxon>Eutheria</taxon>
        <taxon>Euarchontoglires</taxon>
        <taxon>Glires</taxon>
        <taxon>Rodentia</taxon>
        <taxon>Myomorpha</taxon>
        <taxon>Muroidea</taxon>
        <taxon>Muridae</taxon>
        <taxon>Murinae</taxon>
        <taxon>Mus</taxon>
        <taxon>Mus</taxon>
    </lineage>
</organism>
<keyword id="KW-0963">Cytoplasm</keyword>
<keyword id="KW-0440">LIM domain</keyword>
<keyword id="KW-0449">Lipoprotein</keyword>
<keyword id="KW-0472">Membrane</keyword>
<keyword id="KW-0479">Metal-binding</keyword>
<keyword id="KW-0488">Methylation</keyword>
<keyword id="KW-0539">Nucleus</keyword>
<keyword id="KW-0597">Phosphoprotein</keyword>
<keyword id="KW-0636">Prenylation</keyword>
<keyword id="KW-1185">Reference proteome</keyword>
<keyword id="KW-0677">Repeat</keyword>
<keyword id="KW-0862">Zinc</keyword>
<sequence>MPLEMEPKMSKLVFGCQRSSTSDDDSGCALEEYAWVPPGLRPEQIQLYFACLPEEKVPYVNSPGEKHRIKQLLYQLPPHDNEVRYCQSLSEEEKKELQVFSAQRKKEALGRGTIKLLSRAVMHAVCEQCGLQMNGGEVAVFASRAGPGVCWHPSCFVCFTCNELLVDLIYFYQDGKIHCGRHHAELLKPRCSACDEIIFADECTEAEGRHWHMKHFCCLECETVLGGQRYIMKDGRPFCCGCFESLYAEYCETCGEHIGVDHAQMTYDGQHWHATEACFSCAQCKASLLGCPFLPKQGQIYCSKTCSLGEDIHASDSSDSAFQSARSRDSRRSVRMGRSSRSADQCRQSLLLSPALNYKFPGLSGNADDTLSRKLDDVSLASRQGAGFANEEFWKARVEQEASEDPEEWAEHEDYMTQLLLKFGDKNLFQQQSSEVDPRASEHWIPDNMVTNKPEVKPNHQGLASKKYQSDMYWAQSQDGLGDSAYGSHPGPASSRRLQELDLDHGAAGYTHDQSQWYEDSLECLSDLKPEQSIRDSMDSLALSNITGASVDGESKPRPSLYSLQNFEEIEAEDCEKMSNMGTLNSSMLHRSAESLQSLNSGLCPEKILPEEKPAHLPVLRRSKSQSRPQQVKFSDDVIDNGSYDIEIRQPPMSERTRRRAYHFEERGSRPHHHRHRRSRKSRSDNALNLVTERKYSAKDRLRLYTPDNYEKFIQNKSARELQAYMQNANLYSQYAHATSDYALQNPGMNRFLGLCGEDDDSWCSSSTSSSDSEEEGYFLGQPIPQPRPQRFTYYTDDLSSPASALPTPQFTQRTTKSKKKKGHKGKNCIIS</sequence>